<sequence>GCLDIGKTCKDDCECCGCGNVCYCPFDWFGGSWQPFGCSCAYGLKYVCAHKQKKCPNV</sequence>
<comment type="function">
    <text evidence="2 3">No toxic effects on mice at dose levels of 5 ug per mouse. May be toxic to insects.</text>
</comment>
<comment type="subcellular location">
    <subcellularLocation>
        <location evidence="1 3">Secreted</location>
    </subcellularLocation>
</comment>
<comment type="tissue specificity">
    <text evidence="1 3">Expressed by the venom gland.</text>
</comment>
<comment type="domain">
    <text evidence="3">The presence of a 'disulfide through disulfide knot' structurally defines this protein as a knottin.</text>
</comment>
<comment type="mass spectrometry"/>
<comment type="similarity">
    <text evidence="3">Belongs to the neurotoxin 09 (Tx3-6) family.</text>
</comment>
<proteinExistence type="evidence at protein level"/>
<organism evidence="3">
    <name type="scientific">Phoneutria reidyi</name>
    <name type="common">Brazilian Amazonian armed spider</name>
    <name type="synonym">Ctenus reidyi</name>
    <dbReference type="NCBI Taxonomy" id="272752"/>
    <lineage>
        <taxon>Eukaryota</taxon>
        <taxon>Metazoa</taxon>
        <taxon>Ecdysozoa</taxon>
        <taxon>Arthropoda</taxon>
        <taxon>Chelicerata</taxon>
        <taxon>Arachnida</taxon>
        <taxon>Araneae</taxon>
        <taxon>Araneomorphae</taxon>
        <taxon>Entelegynae</taxon>
        <taxon>Lycosoidea</taxon>
        <taxon>Ctenidae</taxon>
        <taxon>Phoneutria</taxon>
    </lineage>
</organism>
<name>TX90C_PHORI</name>
<reference key="1">
    <citation type="journal article" date="2006" name="Comp. Biochem. Physiol.">
        <title>Comparison of the partial proteomes of the venoms of Brazilian spiders of the genus Phoneutria.</title>
        <authorList>
            <person name="Richardson M."/>
            <person name="Pimenta A.M."/>
            <person name="Bemquerer M.P."/>
            <person name="Santoro M.M."/>
            <person name="Beirao P.S."/>
            <person name="Lima M.E."/>
            <person name="Figueiredo S.G."/>
            <person name="Bloch C. Jr."/>
            <person name="Vasconcelos E.A."/>
            <person name="Campos F.A."/>
            <person name="Gomes P.C."/>
            <person name="Cordeiro M.N."/>
        </authorList>
    </citation>
    <scope>PROTEIN SEQUENCE</scope>
    <scope>SUBCELLULAR LOCATION</scope>
    <scope>TISSUE SPECIFICITY</scope>
    <scope>MASS SPECTROMETRY</scope>
    <source>
        <tissue>Venom</tissue>
    </source>
</reference>
<reference evidence="3" key="2">
    <citation type="submission" date="2004-04" db="UniProtKB">
        <title>New neurotoxin PRTx34C2 from venom of Brazilian Amazonian armed spider Phoneutria reidyi.</title>
        <authorList>
            <person name="Richardson M."/>
            <person name="Pimenta A.M.C."/>
            <person name="Bemquerer M.P."/>
            <person name="Santoro M.M."/>
            <person name="Figueiredo S.G."/>
            <person name="Cordeiro M.N."/>
        </authorList>
    </citation>
    <scope>FUNCTION</scope>
</reference>
<keyword id="KW-0903">Direct protein sequencing</keyword>
<keyword id="KW-1015">Disulfide bond</keyword>
<keyword id="KW-0872">Ion channel impairing toxin</keyword>
<keyword id="KW-0960">Knottin</keyword>
<keyword id="KW-0528">Neurotoxin</keyword>
<keyword id="KW-0964">Secreted</keyword>
<keyword id="KW-0800">Toxin</keyword>
<protein>
    <recommendedName>
        <fullName>U8-ctenitoxin-Pr1a</fullName>
        <shortName>U8-CNTX-Pr1a</shortName>
    </recommendedName>
    <alternativeName>
        <fullName>Probable neurotoxin PRTx34C2</fullName>
    </alternativeName>
</protein>
<dbReference type="SMR" id="P83901"/>
<dbReference type="ArachnoServer" id="AS000263">
    <property type="toxin name" value="U8-ctenitoxin-Pr1a"/>
</dbReference>
<dbReference type="GO" id="GO:0005576">
    <property type="term" value="C:extracellular region"/>
    <property type="evidence" value="ECO:0007669"/>
    <property type="project" value="UniProtKB-SubCell"/>
</dbReference>
<dbReference type="GO" id="GO:0099106">
    <property type="term" value="F:ion channel regulator activity"/>
    <property type="evidence" value="ECO:0007669"/>
    <property type="project" value="UniProtKB-KW"/>
</dbReference>
<dbReference type="GO" id="GO:0090729">
    <property type="term" value="F:toxin activity"/>
    <property type="evidence" value="ECO:0007669"/>
    <property type="project" value="UniProtKB-KW"/>
</dbReference>
<evidence type="ECO:0000269" key="1">
    <source>
    </source>
</evidence>
<evidence type="ECO:0000269" key="2">
    <source ref="2"/>
</evidence>
<evidence type="ECO:0000305" key="3"/>
<feature type="chain" id="PRO_0000087638" description="U8-ctenitoxin-Pr1a">
    <location>
        <begin position="1"/>
        <end position="58"/>
    </location>
</feature>
<feature type="disulfide bond" evidence="3">
    <location>
        <begin position="2"/>
        <end position="16"/>
    </location>
</feature>
<feature type="disulfide bond" evidence="3">
    <location>
        <begin position="9"/>
        <end position="22"/>
    </location>
</feature>
<feature type="disulfide bond" evidence="3">
    <location>
        <begin position="15"/>
        <end position="40"/>
    </location>
</feature>
<feature type="disulfide bond" evidence="3">
    <location>
        <begin position="24"/>
        <end position="38"/>
    </location>
</feature>
<feature type="disulfide bond" evidence="3">
    <location>
        <begin position="48"/>
        <end position="55"/>
    </location>
</feature>
<accession>P83901</accession>